<sequence length="876" mass="98018">MAIERYNPRDAEPRWQQKWNEDKVFVTDNSDPREKYYVLEMFPYPSGRIHMGHVRNYAMGDVVARYKRARGFNVLHPMGWDAFGMPAENAAMQNKVHPKDWTYQNIATMRGQLKSMGLSLDWTREFATCDVEYYHRQQALFVDFMEKGLVYRKQSKVNWDPVDHTVLANEQVIDGRGWRSGALVEQRELTQWFFRITDFSQDLLDELDELDQWPEKVRLMQKNWIGRSEGLSLRWQTVADTAPQGFSDITVYTTRPDTLFGASFLAIAADHPLAKELSATNPAIAEFCDECRRHGTSLAALETAEKKGIDTGVKVVHPLDPSWELPVYVANFVLMDYGTGAIFGCPSGDQRDLDFARKYGLPVVAVVAPEGPDAASFTVEDTAFTDDGVMINSSFLNGMKTTDAFEAVVQKLSAQSLGNAPQAERKVNFRLRDWGISRQRYWGCPIPVIHCEVCGVVPVPKKDLPVKLPDDVTFDVPGNPLDRHSTWRHVSCPQCGHDARRETDTMDTFVDSSWYYTRFTAPWEDEPTDPQVANHWLPVDQYIGGIEHAILHLLYSRFFTRAMRETGHVGVKEPFKGLFTQGMVVHETYSRGEGLTREWVPPAELRIEENDGTRRAFLLSSGEEVKIGSIEKMSKSKKNVVDPDDIIASYGADTARFFVLSDSPPDRDVIWSEAGVEGANRFVQRVWRIIGEAAEQLKGVKPKPATEGEGLAASKAAHKTLKAVQEDLDKLAFNKAIARIYELVNALAGPLADVAAGGKPDNVKAAARDAVEILIRIIAPMTPHLAEECWSALGNEGLVAETPWPTFVASLVEENDVVMPVQVNGKKRGELTIARDADQDAVRTAALELDAVKSILAGGEPKKVIVVPQRIVNIVV</sequence>
<name>SYL_AGRFC</name>
<comment type="catalytic activity">
    <reaction evidence="1">
        <text>tRNA(Leu) + L-leucine + ATP = L-leucyl-tRNA(Leu) + AMP + diphosphate</text>
        <dbReference type="Rhea" id="RHEA:11688"/>
        <dbReference type="Rhea" id="RHEA-COMP:9613"/>
        <dbReference type="Rhea" id="RHEA-COMP:9622"/>
        <dbReference type="ChEBI" id="CHEBI:30616"/>
        <dbReference type="ChEBI" id="CHEBI:33019"/>
        <dbReference type="ChEBI" id="CHEBI:57427"/>
        <dbReference type="ChEBI" id="CHEBI:78442"/>
        <dbReference type="ChEBI" id="CHEBI:78494"/>
        <dbReference type="ChEBI" id="CHEBI:456215"/>
        <dbReference type="EC" id="6.1.1.4"/>
    </reaction>
</comment>
<comment type="subcellular location">
    <subcellularLocation>
        <location evidence="1">Cytoplasm</location>
    </subcellularLocation>
</comment>
<comment type="similarity">
    <text evidence="1">Belongs to the class-I aminoacyl-tRNA synthetase family.</text>
</comment>
<gene>
    <name evidence="1" type="primary">leuS</name>
    <name type="ordered locus">Atu2748</name>
    <name type="ORF">AGR_C_4985</name>
</gene>
<reference key="1">
    <citation type="journal article" date="2001" name="Science">
        <title>The genome of the natural genetic engineer Agrobacterium tumefaciens C58.</title>
        <authorList>
            <person name="Wood D.W."/>
            <person name="Setubal J.C."/>
            <person name="Kaul R."/>
            <person name="Monks D.E."/>
            <person name="Kitajima J.P."/>
            <person name="Okura V.K."/>
            <person name="Zhou Y."/>
            <person name="Chen L."/>
            <person name="Wood G.E."/>
            <person name="Almeida N.F. Jr."/>
            <person name="Woo L."/>
            <person name="Chen Y."/>
            <person name="Paulsen I.T."/>
            <person name="Eisen J.A."/>
            <person name="Karp P.D."/>
            <person name="Bovee D. Sr."/>
            <person name="Chapman P."/>
            <person name="Clendenning J."/>
            <person name="Deatherage G."/>
            <person name="Gillet W."/>
            <person name="Grant C."/>
            <person name="Kutyavin T."/>
            <person name="Levy R."/>
            <person name="Li M.-J."/>
            <person name="McClelland E."/>
            <person name="Palmieri A."/>
            <person name="Raymond C."/>
            <person name="Rouse G."/>
            <person name="Saenphimmachak C."/>
            <person name="Wu Z."/>
            <person name="Romero P."/>
            <person name="Gordon D."/>
            <person name="Zhang S."/>
            <person name="Yoo H."/>
            <person name="Tao Y."/>
            <person name="Biddle P."/>
            <person name="Jung M."/>
            <person name="Krespan W."/>
            <person name="Perry M."/>
            <person name="Gordon-Kamm B."/>
            <person name="Liao L."/>
            <person name="Kim S."/>
            <person name="Hendrick C."/>
            <person name="Zhao Z.-Y."/>
            <person name="Dolan M."/>
            <person name="Chumley F."/>
            <person name="Tingey S.V."/>
            <person name="Tomb J.-F."/>
            <person name="Gordon M.P."/>
            <person name="Olson M.V."/>
            <person name="Nester E.W."/>
        </authorList>
    </citation>
    <scope>NUCLEOTIDE SEQUENCE [LARGE SCALE GENOMIC DNA]</scope>
    <source>
        <strain>C58 / ATCC 33970</strain>
    </source>
</reference>
<reference key="2">
    <citation type="journal article" date="2001" name="Science">
        <title>Genome sequence of the plant pathogen and biotechnology agent Agrobacterium tumefaciens C58.</title>
        <authorList>
            <person name="Goodner B."/>
            <person name="Hinkle G."/>
            <person name="Gattung S."/>
            <person name="Miller N."/>
            <person name="Blanchard M."/>
            <person name="Qurollo B."/>
            <person name="Goldman B.S."/>
            <person name="Cao Y."/>
            <person name="Askenazi M."/>
            <person name="Halling C."/>
            <person name="Mullin L."/>
            <person name="Houmiel K."/>
            <person name="Gordon J."/>
            <person name="Vaudin M."/>
            <person name="Iartchouk O."/>
            <person name="Epp A."/>
            <person name="Liu F."/>
            <person name="Wollam C."/>
            <person name="Allinger M."/>
            <person name="Doughty D."/>
            <person name="Scott C."/>
            <person name="Lappas C."/>
            <person name="Markelz B."/>
            <person name="Flanagan C."/>
            <person name="Crowell C."/>
            <person name="Gurson J."/>
            <person name="Lomo C."/>
            <person name="Sear C."/>
            <person name="Strub G."/>
            <person name="Cielo C."/>
            <person name="Slater S."/>
        </authorList>
    </citation>
    <scope>NUCLEOTIDE SEQUENCE [LARGE SCALE GENOMIC DNA]</scope>
    <source>
        <strain>C58 / ATCC 33970</strain>
    </source>
</reference>
<keyword id="KW-0030">Aminoacyl-tRNA synthetase</keyword>
<keyword id="KW-0067">ATP-binding</keyword>
<keyword id="KW-0963">Cytoplasm</keyword>
<keyword id="KW-0436">Ligase</keyword>
<keyword id="KW-0547">Nucleotide-binding</keyword>
<keyword id="KW-0648">Protein biosynthesis</keyword>
<keyword id="KW-1185">Reference proteome</keyword>
<protein>
    <recommendedName>
        <fullName evidence="1">Leucine--tRNA ligase</fullName>
        <ecNumber evidence="1">6.1.1.4</ecNumber>
    </recommendedName>
    <alternativeName>
        <fullName evidence="1">Leucyl-tRNA synthetase</fullName>
        <shortName evidence="1">LeuRS</shortName>
    </alternativeName>
</protein>
<dbReference type="EC" id="6.1.1.4" evidence="1"/>
<dbReference type="EMBL" id="AE007869">
    <property type="protein sequence ID" value="AAK88463.1"/>
    <property type="molecule type" value="Genomic_DNA"/>
</dbReference>
<dbReference type="PIR" id="AC2914">
    <property type="entry name" value="AC2914"/>
</dbReference>
<dbReference type="PIR" id="F97688">
    <property type="entry name" value="F97688"/>
</dbReference>
<dbReference type="RefSeq" id="NP_355678.1">
    <property type="nucleotide sequence ID" value="NC_003062.2"/>
</dbReference>
<dbReference type="RefSeq" id="WP_010972538.1">
    <property type="nucleotide sequence ID" value="NC_003062.2"/>
</dbReference>
<dbReference type="SMR" id="Q8UBV2"/>
<dbReference type="STRING" id="176299.Atu2748"/>
<dbReference type="EnsemblBacteria" id="AAK88463">
    <property type="protein sequence ID" value="AAK88463"/>
    <property type="gene ID" value="Atu2748"/>
</dbReference>
<dbReference type="GeneID" id="1134786"/>
<dbReference type="KEGG" id="atu:Atu2748"/>
<dbReference type="PATRIC" id="fig|176299.10.peg.2758"/>
<dbReference type="eggNOG" id="COG0495">
    <property type="taxonomic scope" value="Bacteria"/>
</dbReference>
<dbReference type="HOGENOM" id="CLU_004427_0_0_5"/>
<dbReference type="OrthoDB" id="9810365at2"/>
<dbReference type="PhylomeDB" id="Q8UBV2"/>
<dbReference type="BioCyc" id="AGRO:ATU2748-MONOMER"/>
<dbReference type="Proteomes" id="UP000000813">
    <property type="component" value="Chromosome circular"/>
</dbReference>
<dbReference type="GO" id="GO:0005829">
    <property type="term" value="C:cytosol"/>
    <property type="evidence" value="ECO:0007669"/>
    <property type="project" value="TreeGrafter"/>
</dbReference>
<dbReference type="GO" id="GO:0002161">
    <property type="term" value="F:aminoacyl-tRNA deacylase activity"/>
    <property type="evidence" value="ECO:0007669"/>
    <property type="project" value="InterPro"/>
</dbReference>
<dbReference type="GO" id="GO:0005524">
    <property type="term" value="F:ATP binding"/>
    <property type="evidence" value="ECO:0007669"/>
    <property type="project" value="UniProtKB-UniRule"/>
</dbReference>
<dbReference type="GO" id="GO:0004823">
    <property type="term" value="F:leucine-tRNA ligase activity"/>
    <property type="evidence" value="ECO:0007669"/>
    <property type="project" value="UniProtKB-UniRule"/>
</dbReference>
<dbReference type="GO" id="GO:0006429">
    <property type="term" value="P:leucyl-tRNA aminoacylation"/>
    <property type="evidence" value="ECO:0007669"/>
    <property type="project" value="UniProtKB-UniRule"/>
</dbReference>
<dbReference type="CDD" id="cd07958">
    <property type="entry name" value="Anticodon_Ia_Leu_BEm"/>
    <property type="match status" value="1"/>
</dbReference>
<dbReference type="CDD" id="cd00812">
    <property type="entry name" value="LeuRS_core"/>
    <property type="match status" value="1"/>
</dbReference>
<dbReference type="FunFam" id="1.10.730.10:FF:000002">
    <property type="entry name" value="Leucine--tRNA ligase"/>
    <property type="match status" value="1"/>
</dbReference>
<dbReference type="FunFam" id="3.40.50.620:FF:000003">
    <property type="entry name" value="Leucine--tRNA ligase"/>
    <property type="match status" value="1"/>
</dbReference>
<dbReference type="FunFam" id="3.40.50.620:FF:000056">
    <property type="entry name" value="Leucine--tRNA ligase"/>
    <property type="match status" value="1"/>
</dbReference>
<dbReference type="Gene3D" id="2.20.28.290">
    <property type="match status" value="1"/>
</dbReference>
<dbReference type="Gene3D" id="3.10.20.590">
    <property type="match status" value="1"/>
</dbReference>
<dbReference type="Gene3D" id="3.40.50.620">
    <property type="entry name" value="HUPs"/>
    <property type="match status" value="2"/>
</dbReference>
<dbReference type="Gene3D" id="1.10.730.10">
    <property type="entry name" value="Isoleucyl-tRNA Synthetase, Domain 1"/>
    <property type="match status" value="1"/>
</dbReference>
<dbReference type="HAMAP" id="MF_00049_B">
    <property type="entry name" value="Leu_tRNA_synth_B"/>
    <property type="match status" value="1"/>
</dbReference>
<dbReference type="InterPro" id="IPR001412">
    <property type="entry name" value="aa-tRNA-synth_I_CS"/>
</dbReference>
<dbReference type="InterPro" id="IPR002300">
    <property type="entry name" value="aa-tRNA-synth_Ia"/>
</dbReference>
<dbReference type="InterPro" id="IPR002302">
    <property type="entry name" value="Leu-tRNA-ligase"/>
</dbReference>
<dbReference type="InterPro" id="IPR025709">
    <property type="entry name" value="Leu_tRNA-synth_edit"/>
</dbReference>
<dbReference type="InterPro" id="IPR013155">
    <property type="entry name" value="M/V/L/I-tRNA-synth_anticd-bd"/>
</dbReference>
<dbReference type="InterPro" id="IPR015413">
    <property type="entry name" value="Methionyl/Leucyl_tRNA_Synth"/>
</dbReference>
<dbReference type="InterPro" id="IPR014729">
    <property type="entry name" value="Rossmann-like_a/b/a_fold"/>
</dbReference>
<dbReference type="InterPro" id="IPR009080">
    <property type="entry name" value="tRNAsynth_Ia_anticodon-bd"/>
</dbReference>
<dbReference type="InterPro" id="IPR009008">
    <property type="entry name" value="Val/Leu/Ile-tRNA-synth_edit"/>
</dbReference>
<dbReference type="NCBIfam" id="TIGR00396">
    <property type="entry name" value="leuS_bact"/>
    <property type="match status" value="1"/>
</dbReference>
<dbReference type="PANTHER" id="PTHR43740:SF2">
    <property type="entry name" value="LEUCINE--TRNA LIGASE, MITOCHONDRIAL"/>
    <property type="match status" value="1"/>
</dbReference>
<dbReference type="PANTHER" id="PTHR43740">
    <property type="entry name" value="LEUCYL-TRNA SYNTHETASE"/>
    <property type="match status" value="1"/>
</dbReference>
<dbReference type="Pfam" id="PF08264">
    <property type="entry name" value="Anticodon_1"/>
    <property type="match status" value="1"/>
</dbReference>
<dbReference type="Pfam" id="PF00133">
    <property type="entry name" value="tRNA-synt_1"/>
    <property type="match status" value="2"/>
</dbReference>
<dbReference type="Pfam" id="PF13603">
    <property type="entry name" value="tRNA-synt_1_2"/>
    <property type="match status" value="1"/>
</dbReference>
<dbReference type="Pfam" id="PF09334">
    <property type="entry name" value="tRNA-synt_1g"/>
    <property type="match status" value="1"/>
</dbReference>
<dbReference type="PRINTS" id="PR00985">
    <property type="entry name" value="TRNASYNTHLEU"/>
</dbReference>
<dbReference type="SUPFAM" id="SSF47323">
    <property type="entry name" value="Anticodon-binding domain of a subclass of class I aminoacyl-tRNA synthetases"/>
    <property type="match status" value="1"/>
</dbReference>
<dbReference type="SUPFAM" id="SSF52374">
    <property type="entry name" value="Nucleotidylyl transferase"/>
    <property type="match status" value="1"/>
</dbReference>
<dbReference type="SUPFAM" id="SSF50677">
    <property type="entry name" value="ValRS/IleRS/LeuRS editing domain"/>
    <property type="match status" value="1"/>
</dbReference>
<dbReference type="PROSITE" id="PS00178">
    <property type="entry name" value="AA_TRNA_LIGASE_I"/>
    <property type="match status" value="1"/>
</dbReference>
<accession>Q8UBV2</accession>
<evidence type="ECO:0000255" key="1">
    <source>
        <dbReference type="HAMAP-Rule" id="MF_00049"/>
    </source>
</evidence>
<proteinExistence type="inferred from homology"/>
<feature type="chain" id="PRO_0000151960" description="Leucine--tRNA ligase">
    <location>
        <begin position="1"/>
        <end position="876"/>
    </location>
</feature>
<feature type="short sequence motif" description="'HIGH' region">
    <location>
        <begin position="43"/>
        <end position="53"/>
    </location>
</feature>
<feature type="short sequence motif" description="'KMSKS' region">
    <location>
        <begin position="632"/>
        <end position="636"/>
    </location>
</feature>
<feature type="binding site" evidence="1">
    <location>
        <position position="635"/>
    </location>
    <ligand>
        <name>ATP</name>
        <dbReference type="ChEBI" id="CHEBI:30616"/>
    </ligand>
</feature>
<organism>
    <name type="scientific">Agrobacterium fabrum (strain C58 / ATCC 33970)</name>
    <name type="common">Agrobacterium tumefaciens (strain C58)</name>
    <dbReference type="NCBI Taxonomy" id="176299"/>
    <lineage>
        <taxon>Bacteria</taxon>
        <taxon>Pseudomonadati</taxon>
        <taxon>Pseudomonadota</taxon>
        <taxon>Alphaproteobacteria</taxon>
        <taxon>Hyphomicrobiales</taxon>
        <taxon>Rhizobiaceae</taxon>
        <taxon>Rhizobium/Agrobacterium group</taxon>
        <taxon>Agrobacterium</taxon>
        <taxon>Agrobacterium tumefaciens complex</taxon>
    </lineage>
</organism>